<reference evidence="4" key="1">
    <citation type="submission" date="2004-07" db="EMBL/GenBank/DDBJ databases">
        <authorList>
            <consortium name="NIH - Zebrafish Gene Collection (ZGC) project"/>
        </authorList>
    </citation>
    <scope>NUCLEOTIDE SEQUENCE [LARGE SCALE MRNA]</scope>
</reference>
<protein>
    <recommendedName>
        <fullName>Proteasome assembly chaperone 1</fullName>
    </recommendedName>
</protein>
<proteinExistence type="evidence at transcript level"/>
<evidence type="ECO:0000250" key="1"/>
<evidence type="ECO:0000250" key="2">
    <source>
        <dbReference type="UniProtKB" id="O95456"/>
    </source>
</evidence>
<evidence type="ECO:0000255" key="3"/>
<evidence type="ECO:0000312" key="4">
    <source>
        <dbReference type="EMBL" id="AAH76460.1"/>
    </source>
</evidence>
<evidence type="ECO:0000312" key="5">
    <source>
        <dbReference type="ZFIN" id="ZDB-GENE-040718-469"/>
    </source>
</evidence>
<keyword id="KW-0143">Chaperone</keyword>
<keyword id="KW-0963">Cytoplasm</keyword>
<keyword id="KW-0256">Endoplasmic reticulum</keyword>
<keyword id="KW-1185">Reference proteome</keyword>
<feature type="chain" id="PRO_0000322548" description="Proteasome assembly chaperone 1">
    <location>
        <begin position="1"/>
        <end position="277"/>
    </location>
</feature>
<organism>
    <name type="scientific">Danio rerio</name>
    <name type="common">Zebrafish</name>
    <name type="synonym">Brachydanio rerio</name>
    <dbReference type="NCBI Taxonomy" id="7955"/>
    <lineage>
        <taxon>Eukaryota</taxon>
        <taxon>Metazoa</taxon>
        <taxon>Chordata</taxon>
        <taxon>Craniata</taxon>
        <taxon>Vertebrata</taxon>
        <taxon>Euteleostomi</taxon>
        <taxon>Actinopterygii</taxon>
        <taxon>Neopterygii</taxon>
        <taxon>Teleostei</taxon>
        <taxon>Ostariophysi</taxon>
        <taxon>Cypriniformes</taxon>
        <taxon>Danionidae</taxon>
        <taxon>Danioninae</taxon>
        <taxon>Danio</taxon>
    </lineage>
</organism>
<comment type="function">
    <text evidence="1">Chaperone protein which promotes assembly of the 20S proteasome as part of a heterodimer with psmg2.</text>
</comment>
<comment type="subunit">
    <text evidence="1">Forms a heterodimer with psmg2.</text>
</comment>
<comment type="subcellular location">
    <subcellularLocation>
        <location evidence="2">Cytoplasm</location>
    </subcellularLocation>
    <subcellularLocation>
        <location evidence="2">Endoplasmic reticulum</location>
    </subcellularLocation>
</comment>
<comment type="PTM">
    <text evidence="2">Degraded by the proteasome upon completion of 20S proteasome maturation.</text>
</comment>
<comment type="similarity">
    <text evidence="3">Belongs to the PSMG1 family.</text>
</comment>
<dbReference type="EMBL" id="BC076460">
    <property type="protein sequence ID" value="AAH76460.1"/>
    <property type="molecule type" value="mRNA"/>
</dbReference>
<dbReference type="RefSeq" id="NP_001002714.1">
    <property type="nucleotide sequence ID" value="NM_001002714.1"/>
</dbReference>
<dbReference type="SMR" id="Q6DG91"/>
<dbReference type="FunCoup" id="Q6DG91">
    <property type="interactions" value="1041"/>
</dbReference>
<dbReference type="STRING" id="7955.ENSDARP00000059475"/>
<dbReference type="PaxDb" id="7955-ENSDARP00000059475"/>
<dbReference type="Ensembl" id="ENSDART00000059476">
    <property type="protein sequence ID" value="ENSDARP00000059475"/>
    <property type="gene ID" value="ENSDARG00000040620"/>
</dbReference>
<dbReference type="GeneID" id="436987"/>
<dbReference type="KEGG" id="dre:436987"/>
<dbReference type="AGR" id="ZFIN:ZDB-GENE-040718-469"/>
<dbReference type="CTD" id="8624"/>
<dbReference type="ZFIN" id="ZDB-GENE-040718-469">
    <property type="gene designation" value="psmg1"/>
</dbReference>
<dbReference type="eggNOG" id="ENOG502QTPH">
    <property type="taxonomic scope" value="Eukaryota"/>
</dbReference>
<dbReference type="HOGENOM" id="CLU_083637_0_0_1"/>
<dbReference type="InParanoid" id="Q6DG91"/>
<dbReference type="OMA" id="SVLICQV"/>
<dbReference type="OrthoDB" id="17536at2759"/>
<dbReference type="PhylomeDB" id="Q6DG91"/>
<dbReference type="TreeFam" id="TF331909"/>
<dbReference type="Reactome" id="R-DRE-9907900">
    <property type="pathway name" value="Proteasome assembly"/>
</dbReference>
<dbReference type="PRO" id="PR:Q6DG91"/>
<dbReference type="Proteomes" id="UP000000437">
    <property type="component" value="Chromosome 10"/>
</dbReference>
<dbReference type="Bgee" id="ENSDARG00000040620">
    <property type="expression patterns" value="Expressed in mature ovarian follicle and 27 other cell types or tissues"/>
</dbReference>
<dbReference type="GO" id="GO:0005737">
    <property type="term" value="C:cytoplasm"/>
    <property type="evidence" value="ECO:0000250"/>
    <property type="project" value="UniProtKB"/>
</dbReference>
<dbReference type="GO" id="GO:0005783">
    <property type="term" value="C:endoplasmic reticulum"/>
    <property type="evidence" value="ECO:0000250"/>
    <property type="project" value="UniProtKB"/>
</dbReference>
<dbReference type="GO" id="GO:0070628">
    <property type="term" value="F:proteasome binding"/>
    <property type="evidence" value="ECO:0000318"/>
    <property type="project" value="GO_Central"/>
</dbReference>
<dbReference type="GO" id="GO:0051131">
    <property type="term" value="P:chaperone-mediated protein complex assembly"/>
    <property type="evidence" value="ECO:0000250"/>
    <property type="project" value="UniProtKB"/>
</dbReference>
<dbReference type="GO" id="GO:0080129">
    <property type="term" value="P:proteasome core complex assembly"/>
    <property type="evidence" value="ECO:0000318"/>
    <property type="project" value="GO_Central"/>
</dbReference>
<dbReference type="InterPro" id="IPR016565">
    <property type="entry name" value="Proteasome_assmbl_chp_1"/>
</dbReference>
<dbReference type="PANTHER" id="PTHR15069">
    <property type="entry name" value="PROTEASOME ASSEMBLY CHAPERONE 1"/>
    <property type="match status" value="1"/>
</dbReference>
<dbReference type="PANTHER" id="PTHR15069:SF1">
    <property type="entry name" value="PROTEASOME ASSEMBLY CHAPERONE 1"/>
    <property type="match status" value="1"/>
</dbReference>
<dbReference type="Pfam" id="PF16094">
    <property type="entry name" value="PAC1"/>
    <property type="match status" value="1"/>
</dbReference>
<dbReference type="PIRSF" id="PIRSF010076">
    <property type="entry name" value="Psome_chaperone-1"/>
    <property type="match status" value="1"/>
</dbReference>
<gene>
    <name evidence="4 5" type="primary">psmg1</name>
    <name type="ORF">wu:fl12g04</name>
    <name type="ORF">wu:fu18c08</name>
    <name type="ORF">zgc:91806</name>
</gene>
<sequence>MATFFGEVLSVYSRAVEEDEYEDMTNENEEDEQIRREIEEKRSVEVCWLLGSQDGPLQCSDLIIGAGPNASGFIRAYLLSTVGWTAVAWLSFWNERSRGSERPTVVPGPGEPSCVLYRLESCPTVLICQCQGFVAEDQLFQFTEKVFSCVQTRDLNVTILSDCSSADYKTSDYLSGSSTPFLRCLKTSTYTHTVTCPPLEQPNICSGLAAAVLSHCQVHQISAVLYQCYSDVLHPDSASMQMFAATLSSVLKLEQSLSADVLQRVTRVSEIQSNLYT</sequence>
<accession>Q6DG91</accession>
<name>PSMG1_DANRE</name>